<comment type="function">
    <text evidence="1">Together with the chaperonin GroEL, plays an essential role in assisting protein folding. The GroEL-GroES system forms a nano-cage that allows encapsulation of the non-native substrate proteins and provides a physical environment optimized to promote and accelerate protein folding. GroES binds to the apical surface of the GroEL ring, thereby capping the opening of the GroEL channel.</text>
</comment>
<comment type="subunit">
    <text evidence="1">Heptamer of 7 subunits arranged in a ring. Interacts with the chaperonin GroEL.</text>
</comment>
<comment type="subcellular location">
    <subcellularLocation>
        <location evidence="1">Cytoplasm</location>
    </subcellularLocation>
</comment>
<comment type="similarity">
    <text evidence="1">Belongs to the GroES chaperonin family.</text>
</comment>
<accession>A7HNA4</accession>
<protein>
    <recommendedName>
        <fullName evidence="1">Co-chaperonin GroES</fullName>
    </recommendedName>
    <alternativeName>
        <fullName evidence="1">10 kDa chaperonin</fullName>
    </alternativeName>
    <alternativeName>
        <fullName evidence="1">Chaperonin-10</fullName>
        <shortName evidence="1">Cpn10</shortName>
    </alternativeName>
</protein>
<dbReference type="EMBL" id="CP000771">
    <property type="protein sequence ID" value="ABS61387.1"/>
    <property type="molecule type" value="Genomic_DNA"/>
</dbReference>
<dbReference type="RefSeq" id="WP_011994692.1">
    <property type="nucleotide sequence ID" value="NC_009718.1"/>
</dbReference>
<dbReference type="SMR" id="A7HNA4"/>
<dbReference type="STRING" id="381764.Fnod_1544"/>
<dbReference type="KEGG" id="fno:Fnod_1544"/>
<dbReference type="eggNOG" id="COG0234">
    <property type="taxonomic scope" value="Bacteria"/>
</dbReference>
<dbReference type="HOGENOM" id="CLU_132825_2_0_0"/>
<dbReference type="OrthoDB" id="9806791at2"/>
<dbReference type="Proteomes" id="UP000002415">
    <property type="component" value="Chromosome"/>
</dbReference>
<dbReference type="GO" id="GO:0005737">
    <property type="term" value="C:cytoplasm"/>
    <property type="evidence" value="ECO:0007669"/>
    <property type="project" value="UniProtKB-SubCell"/>
</dbReference>
<dbReference type="GO" id="GO:0005524">
    <property type="term" value="F:ATP binding"/>
    <property type="evidence" value="ECO:0007669"/>
    <property type="project" value="InterPro"/>
</dbReference>
<dbReference type="GO" id="GO:0046872">
    <property type="term" value="F:metal ion binding"/>
    <property type="evidence" value="ECO:0007669"/>
    <property type="project" value="TreeGrafter"/>
</dbReference>
<dbReference type="GO" id="GO:0044183">
    <property type="term" value="F:protein folding chaperone"/>
    <property type="evidence" value="ECO:0007669"/>
    <property type="project" value="InterPro"/>
</dbReference>
<dbReference type="GO" id="GO:0051087">
    <property type="term" value="F:protein-folding chaperone binding"/>
    <property type="evidence" value="ECO:0007669"/>
    <property type="project" value="TreeGrafter"/>
</dbReference>
<dbReference type="GO" id="GO:0051082">
    <property type="term" value="F:unfolded protein binding"/>
    <property type="evidence" value="ECO:0007669"/>
    <property type="project" value="TreeGrafter"/>
</dbReference>
<dbReference type="GO" id="GO:0051085">
    <property type="term" value="P:chaperone cofactor-dependent protein refolding"/>
    <property type="evidence" value="ECO:0007669"/>
    <property type="project" value="TreeGrafter"/>
</dbReference>
<dbReference type="CDD" id="cd00320">
    <property type="entry name" value="cpn10"/>
    <property type="match status" value="1"/>
</dbReference>
<dbReference type="FunFam" id="2.30.33.40:FF:000001">
    <property type="entry name" value="10 kDa chaperonin"/>
    <property type="match status" value="1"/>
</dbReference>
<dbReference type="Gene3D" id="2.30.33.40">
    <property type="entry name" value="GroES chaperonin"/>
    <property type="match status" value="1"/>
</dbReference>
<dbReference type="HAMAP" id="MF_00580">
    <property type="entry name" value="CH10"/>
    <property type="match status" value="1"/>
</dbReference>
<dbReference type="InterPro" id="IPR020818">
    <property type="entry name" value="Chaperonin_GroES"/>
</dbReference>
<dbReference type="InterPro" id="IPR037124">
    <property type="entry name" value="Chaperonin_GroES_sf"/>
</dbReference>
<dbReference type="InterPro" id="IPR018369">
    <property type="entry name" value="Chaprnonin_Cpn10_CS"/>
</dbReference>
<dbReference type="InterPro" id="IPR011032">
    <property type="entry name" value="GroES-like_sf"/>
</dbReference>
<dbReference type="NCBIfam" id="NF001531">
    <property type="entry name" value="PRK00364.2-2"/>
    <property type="match status" value="1"/>
</dbReference>
<dbReference type="NCBIfam" id="NF011106">
    <property type="entry name" value="PRK14533.1"/>
    <property type="match status" value="1"/>
</dbReference>
<dbReference type="PANTHER" id="PTHR10772">
    <property type="entry name" value="10 KDA HEAT SHOCK PROTEIN"/>
    <property type="match status" value="1"/>
</dbReference>
<dbReference type="PANTHER" id="PTHR10772:SF63">
    <property type="entry name" value="20 KDA CHAPERONIN, CHLOROPLASTIC"/>
    <property type="match status" value="1"/>
</dbReference>
<dbReference type="Pfam" id="PF00166">
    <property type="entry name" value="Cpn10"/>
    <property type="match status" value="1"/>
</dbReference>
<dbReference type="PRINTS" id="PR00297">
    <property type="entry name" value="CHAPERONIN10"/>
</dbReference>
<dbReference type="SMART" id="SM00883">
    <property type="entry name" value="Cpn10"/>
    <property type="match status" value="1"/>
</dbReference>
<dbReference type="SUPFAM" id="SSF50129">
    <property type="entry name" value="GroES-like"/>
    <property type="match status" value="1"/>
</dbReference>
<dbReference type="PROSITE" id="PS00681">
    <property type="entry name" value="CHAPERONINS_CPN10"/>
    <property type="match status" value="1"/>
</dbReference>
<evidence type="ECO:0000255" key="1">
    <source>
        <dbReference type="HAMAP-Rule" id="MF_00580"/>
    </source>
</evidence>
<name>CH10_FERNB</name>
<organism>
    <name type="scientific">Fervidobacterium nodosum (strain ATCC 35602 / DSM 5306 / Rt17-B1)</name>
    <dbReference type="NCBI Taxonomy" id="381764"/>
    <lineage>
        <taxon>Bacteria</taxon>
        <taxon>Thermotogati</taxon>
        <taxon>Thermotogota</taxon>
        <taxon>Thermotogae</taxon>
        <taxon>Thermotogales</taxon>
        <taxon>Fervidobacteriaceae</taxon>
        <taxon>Fervidobacterium</taxon>
    </lineage>
</organism>
<sequence>MKVKPLGERLLIKPIIEEKKTAGGIVLPDAAKEKPMKAEIVEVGKLPEDCQLKVGDKVIYNKYSGTEIKIDDEDYIIIDVSDILAKIEE</sequence>
<reference key="1">
    <citation type="submission" date="2007-07" db="EMBL/GenBank/DDBJ databases">
        <title>Complete sequence of Fervidobacterium nodosum Rt17-B1.</title>
        <authorList>
            <consortium name="US DOE Joint Genome Institute"/>
            <person name="Copeland A."/>
            <person name="Lucas S."/>
            <person name="Lapidus A."/>
            <person name="Barry K."/>
            <person name="Glavina del Rio T."/>
            <person name="Dalin E."/>
            <person name="Tice H."/>
            <person name="Pitluck S."/>
            <person name="Saunders E."/>
            <person name="Brettin T."/>
            <person name="Bruce D."/>
            <person name="Detter J.C."/>
            <person name="Han C."/>
            <person name="Schmutz J."/>
            <person name="Larimer F."/>
            <person name="Land M."/>
            <person name="Hauser L."/>
            <person name="Kyrpides N."/>
            <person name="Mikhailova N."/>
            <person name="Nelson K."/>
            <person name="Gogarten J.P."/>
            <person name="Noll K."/>
            <person name="Richardson P."/>
        </authorList>
    </citation>
    <scope>NUCLEOTIDE SEQUENCE [LARGE SCALE GENOMIC DNA]</scope>
    <source>
        <strain>ATCC 35602 / DSM 5306 / Rt17-B1</strain>
    </source>
</reference>
<feature type="chain" id="PRO_1000072584" description="Co-chaperonin GroES">
    <location>
        <begin position="1"/>
        <end position="89"/>
    </location>
</feature>
<gene>
    <name evidence="1" type="primary">groES</name>
    <name evidence="1" type="synonym">groS</name>
    <name type="ordered locus">Fnod_1544</name>
</gene>
<proteinExistence type="inferred from homology"/>
<keyword id="KW-0143">Chaperone</keyword>
<keyword id="KW-0963">Cytoplasm</keyword>
<keyword id="KW-1185">Reference proteome</keyword>